<sequence length="208" mass="22729">MAVYVVDHPLVKHKLGRLRQHDVPVSEFRAIANELCRLLAYEATKDLETEKVSVQGWAGPVEVDQIKGKKITAVPILRAGLGMLDGFLDMIPGAKVSVVGMFRNEETLEPVQYYTKLAKNIDERMAVILDPMLATGGTLDATIDLLKNAGCPQIKGLFLVAAPEGLKRIVDKHPDVDIYVAAVDERLNEHGYILPGLGDAGDKIFGTK</sequence>
<feature type="chain" id="PRO_0000120823" description="Uracil phosphoribosyltransferase">
    <location>
        <begin position="1"/>
        <end position="208"/>
    </location>
</feature>
<feature type="binding site" evidence="1">
    <location>
        <position position="78"/>
    </location>
    <ligand>
        <name>5-phospho-alpha-D-ribose 1-diphosphate</name>
        <dbReference type="ChEBI" id="CHEBI:58017"/>
    </ligand>
</feature>
<feature type="binding site" evidence="1">
    <location>
        <position position="103"/>
    </location>
    <ligand>
        <name>5-phospho-alpha-D-ribose 1-diphosphate</name>
        <dbReference type="ChEBI" id="CHEBI:58017"/>
    </ligand>
</feature>
<feature type="binding site" evidence="1">
    <location>
        <begin position="130"/>
        <end position="138"/>
    </location>
    <ligand>
        <name>5-phospho-alpha-D-ribose 1-diphosphate</name>
        <dbReference type="ChEBI" id="CHEBI:58017"/>
    </ligand>
</feature>
<feature type="binding site" evidence="1">
    <location>
        <position position="193"/>
    </location>
    <ligand>
        <name>uracil</name>
        <dbReference type="ChEBI" id="CHEBI:17568"/>
    </ligand>
</feature>
<feature type="binding site" evidence="1">
    <location>
        <begin position="198"/>
        <end position="200"/>
    </location>
    <ligand>
        <name>uracil</name>
        <dbReference type="ChEBI" id="CHEBI:17568"/>
    </ligand>
</feature>
<feature type="binding site" evidence="1">
    <location>
        <position position="199"/>
    </location>
    <ligand>
        <name>5-phospho-alpha-D-ribose 1-diphosphate</name>
        <dbReference type="ChEBI" id="CHEBI:58017"/>
    </ligand>
</feature>
<keyword id="KW-0021">Allosteric enzyme</keyword>
<keyword id="KW-0328">Glycosyltransferase</keyword>
<keyword id="KW-0342">GTP-binding</keyword>
<keyword id="KW-0460">Magnesium</keyword>
<keyword id="KW-0547">Nucleotide-binding</keyword>
<keyword id="KW-1185">Reference proteome</keyword>
<keyword id="KW-0808">Transferase</keyword>
<gene>
    <name evidence="1" type="primary">upp</name>
    <name type="ordered locus">DVU_1025</name>
</gene>
<organism>
    <name type="scientific">Nitratidesulfovibrio vulgaris (strain ATCC 29579 / DSM 644 / CCUG 34227 / NCIMB 8303 / VKM B-1760 / Hildenborough)</name>
    <name type="common">Desulfovibrio vulgaris</name>
    <dbReference type="NCBI Taxonomy" id="882"/>
    <lineage>
        <taxon>Bacteria</taxon>
        <taxon>Pseudomonadati</taxon>
        <taxon>Thermodesulfobacteriota</taxon>
        <taxon>Desulfovibrionia</taxon>
        <taxon>Desulfovibrionales</taxon>
        <taxon>Desulfovibrionaceae</taxon>
        <taxon>Nitratidesulfovibrio</taxon>
    </lineage>
</organism>
<comment type="function">
    <text evidence="1">Catalyzes the conversion of uracil and 5-phospho-alpha-D-ribose 1-diphosphate (PRPP) to UMP and diphosphate.</text>
</comment>
<comment type="catalytic activity">
    <reaction evidence="1">
        <text>UMP + diphosphate = 5-phospho-alpha-D-ribose 1-diphosphate + uracil</text>
        <dbReference type="Rhea" id="RHEA:13017"/>
        <dbReference type="ChEBI" id="CHEBI:17568"/>
        <dbReference type="ChEBI" id="CHEBI:33019"/>
        <dbReference type="ChEBI" id="CHEBI:57865"/>
        <dbReference type="ChEBI" id="CHEBI:58017"/>
        <dbReference type="EC" id="2.4.2.9"/>
    </reaction>
</comment>
<comment type="cofactor">
    <cofactor evidence="1">
        <name>Mg(2+)</name>
        <dbReference type="ChEBI" id="CHEBI:18420"/>
    </cofactor>
    <text evidence="1">Binds 1 Mg(2+) ion per subunit. The magnesium is bound as Mg-PRPP.</text>
</comment>
<comment type="activity regulation">
    <text evidence="1">Allosterically activated by GTP.</text>
</comment>
<comment type="pathway">
    <text evidence="1">Pyrimidine metabolism; UMP biosynthesis via salvage pathway; UMP from uracil: step 1/1.</text>
</comment>
<comment type="similarity">
    <text evidence="1">Belongs to the UPRTase family.</text>
</comment>
<reference key="1">
    <citation type="journal article" date="2004" name="Nat. Biotechnol.">
        <title>The genome sequence of the anaerobic, sulfate-reducing bacterium Desulfovibrio vulgaris Hildenborough.</title>
        <authorList>
            <person name="Heidelberg J.F."/>
            <person name="Seshadri R."/>
            <person name="Haveman S.A."/>
            <person name="Hemme C.L."/>
            <person name="Paulsen I.T."/>
            <person name="Kolonay J.F."/>
            <person name="Eisen J.A."/>
            <person name="Ward N.L."/>
            <person name="Methe B.A."/>
            <person name="Brinkac L.M."/>
            <person name="Daugherty S.C."/>
            <person name="DeBoy R.T."/>
            <person name="Dodson R.J."/>
            <person name="Durkin A.S."/>
            <person name="Madupu R."/>
            <person name="Nelson W.C."/>
            <person name="Sullivan S.A."/>
            <person name="Fouts D.E."/>
            <person name="Haft D.H."/>
            <person name="Selengut J."/>
            <person name="Peterson J.D."/>
            <person name="Davidsen T.M."/>
            <person name="Zafar N."/>
            <person name="Zhou L."/>
            <person name="Radune D."/>
            <person name="Dimitrov G."/>
            <person name="Hance M."/>
            <person name="Tran K."/>
            <person name="Khouri H.M."/>
            <person name="Gill J."/>
            <person name="Utterback T.R."/>
            <person name="Feldblyum T.V."/>
            <person name="Wall J.D."/>
            <person name="Voordouw G."/>
            <person name="Fraser C.M."/>
        </authorList>
    </citation>
    <scope>NUCLEOTIDE SEQUENCE [LARGE SCALE GENOMIC DNA]</scope>
    <source>
        <strain>ATCC 29579 / DSM 644 / CCUG 34227 / NCIMB 8303 / VKM B-1760 / Hildenborough</strain>
    </source>
</reference>
<evidence type="ECO:0000255" key="1">
    <source>
        <dbReference type="HAMAP-Rule" id="MF_01218"/>
    </source>
</evidence>
<dbReference type="EC" id="2.4.2.9" evidence="1"/>
<dbReference type="EMBL" id="AE017285">
    <property type="protein sequence ID" value="AAS95505.1"/>
    <property type="molecule type" value="Genomic_DNA"/>
</dbReference>
<dbReference type="RefSeq" id="WP_010938324.1">
    <property type="nucleotide sequence ID" value="NC_002937.3"/>
</dbReference>
<dbReference type="RefSeq" id="YP_010246.1">
    <property type="nucleotide sequence ID" value="NC_002937.3"/>
</dbReference>
<dbReference type="SMR" id="Q72DA4"/>
<dbReference type="IntAct" id="Q72DA4">
    <property type="interactions" value="1"/>
</dbReference>
<dbReference type="STRING" id="882.DVU_1025"/>
<dbReference type="PaxDb" id="882-DVU_1025"/>
<dbReference type="EnsemblBacteria" id="AAS95505">
    <property type="protein sequence ID" value="AAS95505"/>
    <property type="gene ID" value="DVU_1025"/>
</dbReference>
<dbReference type="KEGG" id="dvu:DVU_1025"/>
<dbReference type="PATRIC" id="fig|882.5.peg.963"/>
<dbReference type="eggNOG" id="COG0035">
    <property type="taxonomic scope" value="Bacteria"/>
</dbReference>
<dbReference type="HOGENOM" id="CLU_067096_2_2_7"/>
<dbReference type="OrthoDB" id="9781675at2"/>
<dbReference type="PhylomeDB" id="Q72DA4"/>
<dbReference type="UniPathway" id="UPA00574">
    <property type="reaction ID" value="UER00636"/>
</dbReference>
<dbReference type="Proteomes" id="UP000002194">
    <property type="component" value="Chromosome"/>
</dbReference>
<dbReference type="GO" id="GO:0005525">
    <property type="term" value="F:GTP binding"/>
    <property type="evidence" value="ECO:0007669"/>
    <property type="project" value="UniProtKB-KW"/>
</dbReference>
<dbReference type="GO" id="GO:0000287">
    <property type="term" value="F:magnesium ion binding"/>
    <property type="evidence" value="ECO:0007669"/>
    <property type="project" value="UniProtKB-UniRule"/>
</dbReference>
<dbReference type="GO" id="GO:0004845">
    <property type="term" value="F:uracil phosphoribosyltransferase activity"/>
    <property type="evidence" value="ECO:0007669"/>
    <property type="project" value="UniProtKB-UniRule"/>
</dbReference>
<dbReference type="GO" id="GO:0044206">
    <property type="term" value="P:UMP salvage"/>
    <property type="evidence" value="ECO:0007669"/>
    <property type="project" value="UniProtKB-UniRule"/>
</dbReference>
<dbReference type="GO" id="GO:0006223">
    <property type="term" value="P:uracil salvage"/>
    <property type="evidence" value="ECO:0007669"/>
    <property type="project" value="InterPro"/>
</dbReference>
<dbReference type="CDD" id="cd06223">
    <property type="entry name" value="PRTases_typeI"/>
    <property type="match status" value="1"/>
</dbReference>
<dbReference type="FunFam" id="3.40.50.2020:FF:000003">
    <property type="entry name" value="Uracil phosphoribosyltransferase"/>
    <property type="match status" value="1"/>
</dbReference>
<dbReference type="Gene3D" id="3.40.50.2020">
    <property type="match status" value="1"/>
</dbReference>
<dbReference type="HAMAP" id="MF_01218_B">
    <property type="entry name" value="Upp_B"/>
    <property type="match status" value="1"/>
</dbReference>
<dbReference type="InterPro" id="IPR000836">
    <property type="entry name" value="PRibTrfase_dom"/>
</dbReference>
<dbReference type="InterPro" id="IPR029057">
    <property type="entry name" value="PRTase-like"/>
</dbReference>
<dbReference type="InterPro" id="IPR034332">
    <property type="entry name" value="Upp_B"/>
</dbReference>
<dbReference type="InterPro" id="IPR050054">
    <property type="entry name" value="UPRTase/APRTase"/>
</dbReference>
<dbReference type="InterPro" id="IPR005765">
    <property type="entry name" value="Ura_phspho_trans"/>
</dbReference>
<dbReference type="NCBIfam" id="NF001097">
    <property type="entry name" value="PRK00129.1"/>
    <property type="match status" value="1"/>
</dbReference>
<dbReference type="NCBIfam" id="TIGR01091">
    <property type="entry name" value="upp"/>
    <property type="match status" value="1"/>
</dbReference>
<dbReference type="PANTHER" id="PTHR32315">
    <property type="entry name" value="ADENINE PHOSPHORIBOSYLTRANSFERASE"/>
    <property type="match status" value="1"/>
</dbReference>
<dbReference type="PANTHER" id="PTHR32315:SF4">
    <property type="entry name" value="URACIL PHOSPHORIBOSYLTRANSFERASE, CHLOROPLASTIC"/>
    <property type="match status" value="1"/>
</dbReference>
<dbReference type="Pfam" id="PF14681">
    <property type="entry name" value="UPRTase"/>
    <property type="match status" value="1"/>
</dbReference>
<dbReference type="SUPFAM" id="SSF53271">
    <property type="entry name" value="PRTase-like"/>
    <property type="match status" value="1"/>
</dbReference>
<protein>
    <recommendedName>
        <fullName evidence="1">Uracil phosphoribosyltransferase</fullName>
        <ecNumber evidence="1">2.4.2.9</ecNumber>
    </recommendedName>
    <alternativeName>
        <fullName evidence="1">UMP pyrophosphorylase</fullName>
    </alternativeName>
    <alternativeName>
        <fullName evidence="1">UPRTase</fullName>
    </alternativeName>
</protein>
<accession>Q72DA4</accession>
<proteinExistence type="inferred from homology"/>
<name>UPP_NITV2</name>